<keyword id="KW-0046">Antibiotic resistance</keyword>
<keyword id="KW-0067">ATP-binding</keyword>
<keyword id="KW-0997">Cell inner membrane</keyword>
<keyword id="KW-1003">Cell membrane</keyword>
<keyword id="KW-0472">Membrane</keyword>
<keyword id="KW-0547">Nucleotide-binding</keyword>
<keyword id="KW-1185">Reference proteome</keyword>
<keyword id="KW-1278">Translocase</keyword>
<keyword id="KW-0812">Transmembrane</keyword>
<keyword id="KW-1133">Transmembrane helix</keyword>
<keyword id="KW-0813">Transport</keyword>
<name>MACB_BURPS</name>
<feature type="chain" id="PRO_0000269929" description="Macrolide export ATP-binding/permease protein MacB">
    <location>
        <begin position="1"/>
        <end position="653"/>
    </location>
</feature>
<feature type="transmembrane region" description="Helical" evidence="1">
    <location>
        <begin position="278"/>
        <end position="298"/>
    </location>
</feature>
<feature type="transmembrane region" description="Helical" evidence="1">
    <location>
        <begin position="526"/>
        <end position="546"/>
    </location>
</feature>
<feature type="transmembrane region" description="Helical" evidence="1">
    <location>
        <begin position="587"/>
        <end position="607"/>
    </location>
</feature>
<feature type="transmembrane region" description="Helical" evidence="1">
    <location>
        <begin position="616"/>
        <end position="636"/>
    </location>
</feature>
<feature type="domain" description="ABC transporter" evidence="1">
    <location>
        <begin position="6"/>
        <end position="244"/>
    </location>
</feature>
<feature type="binding site" evidence="1">
    <location>
        <begin position="42"/>
        <end position="49"/>
    </location>
    <ligand>
        <name>ATP</name>
        <dbReference type="ChEBI" id="CHEBI:30616"/>
    </ligand>
</feature>
<reference key="1">
    <citation type="journal article" date="2004" name="Proc. Natl. Acad. Sci. U.S.A.">
        <title>Genomic plasticity of the causative agent of melioidosis, Burkholderia pseudomallei.</title>
        <authorList>
            <person name="Holden M.T.G."/>
            <person name="Titball R.W."/>
            <person name="Peacock S.J."/>
            <person name="Cerdeno-Tarraga A.-M."/>
            <person name="Atkins T."/>
            <person name="Crossman L.C."/>
            <person name="Pitt T."/>
            <person name="Churcher C."/>
            <person name="Mungall K.L."/>
            <person name="Bentley S.D."/>
            <person name="Sebaihia M."/>
            <person name="Thomson N.R."/>
            <person name="Bason N."/>
            <person name="Beacham I.R."/>
            <person name="Brooks K."/>
            <person name="Brown K.A."/>
            <person name="Brown N.F."/>
            <person name="Challis G.L."/>
            <person name="Cherevach I."/>
            <person name="Chillingworth T."/>
            <person name="Cronin A."/>
            <person name="Crossett B."/>
            <person name="Davis P."/>
            <person name="DeShazer D."/>
            <person name="Feltwell T."/>
            <person name="Fraser A."/>
            <person name="Hance Z."/>
            <person name="Hauser H."/>
            <person name="Holroyd S."/>
            <person name="Jagels K."/>
            <person name="Keith K.E."/>
            <person name="Maddison M."/>
            <person name="Moule S."/>
            <person name="Price C."/>
            <person name="Quail M.A."/>
            <person name="Rabbinowitsch E."/>
            <person name="Rutherford K."/>
            <person name="Sanders M."/>
            <person name="Simmonds M."/>
            <person name="Songsivilai S."/>
            <person name="Stevens K."/>
            <person name="Tumapa S."/>
            <person name="Vesaratchavest M."/>
            <person name="Whitehead S."/>
            <person name="Yeats C."/>
            <person name="Barrell B.G."/>
            <person name="Oyston P.C.F."/>
            <person name="Parkhill J."/>
        </authorList>
    </citation>
    <scope>NUCLEOTIDE SEQUENCE [LARGE SCALE GENOMIC DNA]</scope>
    <source>
        <strain>K96243</strain>
    </source>
</reference>
<organism>
    <name type="scientific">Burkholderia pseudomallei (strain K96243)</name>
    <dbReference type="NCBI Taxonomy" id="272560"/>
    <lineage>
        <taxon>Bacteria</taxon>
        <taxon>Pseudomonadati</taxon>
        <taxon>Pseudomonadota</taxon>
        <taxon>Betaproteobacteria</taxon>
        <taxon>Burkholderiales</taxon>
        <taxon>Burkholderiaceae</taxon>
        <taxon>Burkholderia</taxon>
        <taxon>pseudomallei group</taxon>
    </lineage>
</organism>
<comment type="function">
    <text evidence="1">Non-canonical ABC transporter that contains transmembrane domains (TMD), which form a pore in the inner membrane, and an ATP-binding domain (NBD), which is responsible for energy generation. Confers resistance against macrolides.</text>
</comment>
<comment type="subunit">
    <text evidence="1">Homodimer.</text>
</comment>
<comment type="subcellular location">
    <subcellularLocation>
        <location evidence="1">Cell inner membrane</location>
        <topology evidence="1">Multi-pass membrane protein</topology>
    </subcellularLocation>
</comment>
<comment type="similarity">
    <text evidence="1">Belongs to the ABC transporter superfamily. Macrolide exporter (TC 3.A.1.122) family.</text>
</comment>
<gene>
    <name evidence="1" type="primary">macB</name>
    <name type="ordered locus">BPSS0624</name>
</gene>
<sequence length="653" mass="70312">MTGPLLQLTRVTRRFPAGEKDVVVLDDVSLSIDAGEIVAIVGASGSGKSTLMNILGCLDHPSSGSYTVGGRETSELESDELARLRREHFGFIFQRYHLLPHLCAAENVEMPAVYAGSAQAQRRERALALLARLGLSDRASHRPSQLSGGQQQRVSIARALMNGGEVILADEPTGALDSKSGRDVIRVLRELNALGHTVIIVTHDEQVAAHARRIIEISDGRIVGDRLNPHADAADAAPDASGGAQPQRARRLSAGVGRFAEAFRMAWIALVSHRLRTLLTMLGIIIGITSVVSIVAIGEGAKRYMLDEIGSIGTNTINVYPGADWGDSRADAIQTLVAADAAALADQIYIDSATPETSRSLLLRYRNVDVNALVSGVGERFFQVRGMKLAQGIAFGADEVRRQAQVAVIDENTRRKLFGANPNPLGEVILIDNLPCVVIGVTASKKSAFGDMKNLNVWVPYTTASGRLFGQRHLDSITVRVRDGQPSDAAERSLTKLMLQRHGRKDFFTYNMDSVVKTVEKTGQSLTLLLSLIAVISLVVGGIGVMNIMLVSVTERTREIGIRMAVGARQTDIMQQFLVEAVTVCLMGGAIGIVLSFGMSFVFSLFVDQWKMVFSAASIASAFLCSTLIGVVFGFMPARNASRLDPIDALARD</sequence>
<proteinExistence type="inferred from homology"/>
<evidence type="ECO:0000255" key="1">
    <source>
        <dbReference type="HAMAP-Rule" id="MF_01720"/>
    </source>
</evidence>
<accession>Q63MM6</accession>
<protein>
    <recommendedName>
        <fullName evidence="1">Macrolide export ATP-binding/permease protein MacB</fullName>
        <ecNumber evidence="1">7.6.2.-</ecNumber>
    </recommendedName>
</protein>
<dbReference type="EC" id="7.6.2.-" evidence="1"/>
<dbReference type="EMBL" id="BX571966">
    <property type="protein sequence ID" value="CAH38081.1"/>
    <property type="molecule type" value="Genomic_DNA"/>
</dbReference>
<dbReference type="RefSeq" id="WP_004523215.1">
    <property type="nucleotide sequence ID" value="NZ_CP009537.1"/>
</dbReference>
<dbReference type="RefSeq" id="YP_110645.1">
    <property type="nucleotide sequence ID" value="NC_006351.1"/>
</dbReference>
<dbReference type="SMR" id="Q63MM6"/>
<dbReference type="STRING" id="272560.BPSS0624"/>
<dbReference type="GeneID" id="93062747"/>
<dbReference type="KEGG" id="bps:BPSS0624"/>
<dbReference type="PATRIC" id="fig|272560.51.peg.6808"/>
<dbReference type="eggNOG" id="COG0577">
    <property type="taxonomic scope" value="Bacteria"/>
</dbReference>
<dbReference type="eggNOG" id="COG1136">
    <property type="taxonomic scope" value="Bacteria"/>
</dbReference>
<dbReference type="Proteomes" id="UP000000605">
    <property type="component" value="Chromosome 2"/>
</dbReference>
<dbReference type="GO" id="GO:0005886">
    <property type="term" value="C:plasma membrane"/>
    <property type="evidence" value="ECO:0007669"/>
    <property type="project" value="UniProtKB-SubCell"/>
</dbReference>
<dbReference type="GO" id="GO:0005524">
    <property type="term" value="F:ATP binding"/>
    <property type="evidence" value="ECO:0007669"/>
    <property type="project" value="UniProtKB-KW"/>
</dbReference>
<dbReference type="GO" id="GO:0016887">
    <property type="term" value="F:ATP hydrolysis activity"/>
    <property type="evidence" value="ECO:0007669"/>
    <property type="project" value="InterPro"/>
</dbReference>
<dbReference type="GO" id="GO:0022857">
    <property type="term" value="F:transmembrane transporter activity"/>
    <property type="evidence" value="ECO:0007669"/>
    <property type="project" value="TreeGrafter"/>
</dbReference>
<dbReference type="GO" id="GO:0046677">
    <property type="term" value="P:response to antibiotic"/>
    <property type="evidence" value="ECO:0007669"/>
    <property type="project" value="UniProtKB-KW"/>
</dbReference>
<dbReference type="CDD" id="cd03255">
    <property type="entry name" value="ABC_MJ0796_LolCDE_FtsE"/>
    <property type="match status" value="1"/>
</dbReference>
<dbReference type="FunFam" id="3.40.50.300:FF:000032">
    <property type="entry name" value="Export ABC transporter ATP-binding protein"/>
    <property type="match status" value="1"/>
</dbReference>
<dbReference type="Gene3D" id="3.40.50.300">
    <property type="entry name" value="P-loop containing nucleotide triphosphate hydrolases"/>
    <property type="match status" value="1"/>
</dbReference>
<dbReference type="InterPro" id="IPR003593">
    <property type="entry name" value="AAA+_ATPase"/>
</dbReference>
<dbReference type="InterPro" id="IPR003838">
    <property type="entry name" value="ABC3_permease_C"/>
</dbReference>
<dbReference type="InterPro" id="IPR003439">
    <property type="entry name" value="ABC_transporter-like_ATP-bd"/>
</dbReference>
<dbReference type="InterPro" id="IPR017871">
    <property type="entry name" value="ABC_transporter-like_CS"/>
</dbReference>
<dbReference type="InterPro" id="IPR017911">
    <property type="entry name" value="MacB-like_ATP-bd"/>
</dbReference>
<dbReference type="InterPro" id="IPR025857">
    <property type="entry name" value="MacB_PCD"/>
</dbReference>
<dbReference type="InterPro" id="IPR050250">
    <property type="entry name" value="Macrolide_Exporter_MacB"/>
</dbReference>
<dbReference type="InterPro" id="IPR027417">
    <property type="entry name" value="P-loop_NTPase"/>
</dbReference>
<dbReference type="NCBIfam" id="NF007826">
    <property type="entry name" value="PRK10535.1"/>
    <property type="match status" value="1"/>
</dbReference>
<dbReference type="PANTHER" id="PTHR30572:SF7">
    <property type="entry name" value="MACROLIDE EXPORT ATP-BINDING_PERMEASE PROTEIN MACB"/>
    <property type="match status" value="1"/>
</dbReference>
<dbReference type="PANTHER" id="PTHR30572">
    <property type="entry name" value="MEMBRANE COMPONENT OF TRANSPORTER-RELATED"/>
    <property type="match status" value="1"/>
</dbReference>
<dbReference type="Pfam" id="PF00005">
    <property type="entry name" value="ABC_tran"/>
    <property type="match status" value="1"/>
</dbReference>
<dbReference type="Pfam" id="PF02687">
    <property type="entry name" value="FtsX"/>
    <property type="match status" value="1"/>
</dbReference>
<dbReference type="Pfam" id="PF12704">
    <property type="entry name" value="MacB_PCD"/>
    <property type="match status" value="1"/>
</dbReference>
<dbReference type="SMART" id="SM00382">
    <property type="entry name" value="AAA"/>
    <property type="match status" value="1"/>
</dbReference>
<dbReference type="SUPFAM" id="SSF52540">
    <property type="entry name" value="P-loop containing nucleoside triphosphate hydrolases"/>
    <property type="match status" value="1"/>
</dbReference>
<dbReference type="PROSITE" id="PS00211">
    <property type="entry name" value="ABC_TRANSPORTER_1"/>
    <property type="match status" value="1"/>
</dbReference>
<dbReference type="PROSITE" id="PS50893">
    <property type="entry name" value="ABC_TRANSPORTER_2"/>
    <property type="match status" value="1"/>
</dbReference>
<dbReference type="PROSITE" id="PS51267">
    <property type="entry name" value="MACB"/>
    <property type="match status" value="1"/>
</dbReference>